<dbReference type="EC" id="6.1.1.18" evidence="1"/>
<dbReference type="EMBL" id="FM209186">
    <property type="protein sequence ID" value="CAW28262.1"/>
    <property type="molecule type" value="Genomic_DNA"/>
</dbReference>
<dbReference type="RefSeq" id="WP_003139945.1">
    <property type="nucleotide sequence ID" value="NC_011770.1"/>
</dbReference>
<dbReference type="SMR" id="B7VB85"/>
<dbReference type="KEGG" id="pag:PLES_35351"/>
<dbReference type="HOGENOM" id="CLU_001882_2_3_6"/>
<dbReference type="GO" id="GO:0005829">
    <property type="term" value="C:cytosol"/>
    <property type="evidence" value="ECO:0007669"/>
    <property type="project" value="TreeGrafter"/>
</dbReference>
<dbReference type="GO" id="GO:0005524">
    <property type="term" value="F:ATP binding"/>
    <property type="evidence" value="ECO:0007669"/>
    <property type="project" value="UniProtKB-UniRule"/>
</dbReference>
<dbReference type="GO" id="GO:0004819">
    <property type="term" value="F:glutamine-tRNA ligase activity"/>
    <property type="evidence" value="ECO:0007669"/>
    <property type="project" value="UniProtKB-UniRule"/>
</dbReference>
<dbReference type="GO" id="GO:0006425">
    <property type="term" value="P:glutaminyl-tRNA aminoacylation"/>
    <property type="evidence" value="ECO:0007669"/>
    <property type="project" value="InterPro"/>
</dbReference>
<dbReference type="GO" id="GO:0006424">
    <property type="term" value="P:glutamyl-tRNA aminoacylation"/>
    <property type="evidence" value="ECO:0007669"/>
    <property type="project" value="UniProtKB-UniRule"/>
</dbReference>
<dbReference type="CDD" id="cd00807">
    <property type="entry name" value="GlnRS_core"/>
    <property type="match status" value="1"/>
</dbReference>
<dbReference type="FunFam" id="1.10.1160.10:FF:000001">
    <property type="entry name" value="Glutamine--tRNA ligase"/>
    <property type="match status" value="1"/>
</dbReference>
<dbReference type="FunFam" id="2.40.240.10:FF:000001">
    <property type="entry name" value="Glutamine--tRNA ligase"/>
    <property type="match status" value="1"/>
</dbReference>
<dbReference type="FunFam" id="3.90.800.10:FF:000001">
    <property type="entry name" value="Glutamine--tRNA ligase"/>
    <property type="match status" value="1"/>
</dbReference>
<dbReference type="FunFam" id="3.40.50.620:FF:000037">
    <property type="entry name" value="Glutamine--tRNA ligase cytoplasmic"/>
    <property type="match status" value="1"/>
</dbReference>
<dbReference type="Gene3D" id="1.10.1160.10">
    <property type="entry name" value="Glutamyl-trna Synthetase, Domain 2"/>
    <property type="match status" value="1"/>
</dbReference>
<dbReference type="Gene3D" id="3.90.800.10">
    <property type="entry name" value="Glutamyl-tRNA Synthetase, Domain 3"/>
    <property type="match status" value="1"/>
</dbReference>
<dbReference type="Gene3D" id="3.40.50.620">
    <property type="entry name" value="HUPs"/>
    <property type="match status" value="1"/>
</dbReference>
<dbReference type="Gene3D" id="2.40.240.10">
    <property type="entry name" value="Ribosomal Protein L25, Chain P"/>
    <property type="match status" value="2"/>
</dbReference>
<dbReference type="HAMAP" id="MF_00126">
    <property type="entry name" value="Gln_tRNA_synth"/>
    <property type="match status" value="1"/>
</dbReference>
<dbReference type="InterPro" id="IPR001412">
    <property type="entry name" value="aa-tRNA-synth_I_CS"/>
</dbReference>
<dbReference type="InterPro" id="IPR004514">
    <property type="entry name" value="Gln-tRNA-synth"/>
</dbReference>
<dbReference type="InterPro" id="IPR050132">
    <property type="entry name" value="Gln/Glu-tRNA_Ligase"/>
</dbReference>
<dbReference type="InterPro" id="IPR022861">
    <property type="entry name" value="Gln_tRNA_ligase_bac"/>
</dbReference>
<dbReference type="InterPro" id="IPR000924">
    <property type="entry name" value="Glu/Gln-tRNA-synth"/>
</dbReference>
<dbReference type="InterPro" id="IPR020058">
    <property type="entry name" value="Glu/Gln-tRNA-synth_Ib_cat-dom"/>
</dbReference>
<dbReference type="InterPro" id="IPR020059">
    <property type="entry name" value="Glu/Gln-tRNA-synth_Ib_codon-bd"/>
</dbReference>
<dbReference type="InterPro" id="IPR020061">
    <property type="entry name" value="Glu_tRNA_lig_a-bdl"/>
</dbReference>
<dbReference type="InterPro" id="IPR020056">
    <property type="entry name" value="Rbsml_bL25/Gln-tRNA_synth_N"/>
</dbReference>
<dbReference type="InterPro" id="IPR011035">
    <property type="entry name" value="Ribosomal_bL25/Gln-tRNA_synth"/>
</dbReference>
<dbReference type="InterPro" id="IPR014729">
    <property type="entry name" value="Rossmann-like_a/b/a_fold"/>
</dbReference>
<dbReference type="InterPro" id="IPR049437">
    <property type="entry name" value="tRNA-synt_1c_C2"/>
</dbReference>
<dbReference type="NCBIfam" id="TIGR00440">
    <property type="entry name" value="glnS"/>
    <property type="match status" value="1"/>
</dbReference>
<dbReference type="NCBIfam" id="NF011291">
    <property type="entry name" value="PRK14703.1"/>
    <property type="match status" value="1"/>
</dbReference>
<dbReference type="PANTHER" id="PTHR43097:SF5">
    <property type="entry name" value="GLUTAMATE--TRNA LIGASE"/>
    <property type="match status" value="1"/>
</dbReference>
<dbReference type="PANTHER" id="PTHR43097">
    <property type="entry name" value="GLUTAMINE-TRNA LIGASE"/>
    <property type="match status" value="1"/>
</dbReference>
<dbReference type="Pfam" id="PF00749">
    <property type="entry name" value="tRNA-synt_1c"/>
    <property type="match status" value="1"/>
</dbReference>
<dbReference type="Pfam" id="PF03950">
    <property type="entry name" value="tRNA-synt_1c_C"/>
    <property type="match status" value="1"/>
</dbReference>
<dbReference type="Pfam" id="PF20974">
    <property type="entry name" value="tRNA-synt_1c_C2"/>
    <property type="match status" value="1"/>
</dbReference>
<dbReference type="PRINTS" id="PR00987">
    <property type="entry name" value="TRNASYNTHGLU"/>
</dbReference>
<dbReference type="SUPFAM" id="SSF52374">
    <property type="entry name" value="Nucleotidylyl transferase"/>
    <property type="match status" value="1"/>
</dbReference>
<dbReference type="SUPFAM" id="SSF50715">
    <property type="entry name" value="Ribosomal protein L25-like"/>
    <property type="match status" value="1"/>
</dbReference>
<dbReference type="PROSITE" id="PS00178">
    <property type="entry name" value="AA_TRNA_LIGASE_I"/>
    <property type="match status" value="1"/>
</dbReference>
<evidence type="ECO:0000255" key="1">
    <source>
        <dbReference type="HAMAP-Rule" id="MF_00126"/>
    </source>
</evidence>
<comment type="catalytic activity">
    <reaction evidence="1">
        <text>tRNA(Gln) + L-glutamine + ATP = L-glutaminyl-tRNA(Gln) + AMP + diphosphate</text>
        <dbReference type="Rhea" id="RHEA:20121"/>
        <dbReference type="Rhea" id="RHEA-COMP:9662"/>
        <dbReference type="Rhea" id="RHEA-COMP:9681"/>
        <dbReference type="ChEBI" id="CHEBI:30616"/>
        <dbReference type="ChEBI" id="CHEBI:33019"/>
        <dbReference type="ChEBI" id="CHEBI:58359"/>
        <dbReference type="ChEBI" id="CHEBI:78442"/>
        <dbReference type="ChEBI" id="CHEBI:78521"/>
        <dbReference type="ChEBI" id="CHEBI:456215"/>
        <dbReference type="EC" id="6.1.1.18"/>
    </reaction>
</comment>
<comment type="subunit">
    <text evidence="1">Monomer.</text>
</comment>
<comment type="subcellular location">
    <subcellularLocation>
        <location evidence="1">Cytoplasm</location>
    </subcellularLocation>
</comment>
<comment type="similarity">
    <text evidence="1">Belongs to the class-I aminoacyl-tRNA synthetase family.</text>
</comment>
<accession>B7VB85</accession>
<gene>
    <name evidence="1" type="primary">glnS</name>
    <name type="ordered locus">PLES_35351</name>
</gene>
<protein>
    <recommendedName>
        <fullName evidence="1">Glutamine--tRNA ligase</fullName>
        <ecNumber evidence="1">6.1.1.18</ecNumber>
    </recommendedName>
    <alternativeName>
        <fullName evidence="1">Glutaminyl-tRNA synthetase</fullName>
        <shortName evidence="1">GlnRS</shortName>
    </alternativeName>
</protein>
<name>SYQ_PSEA8</name>
<organism>
    <name type="scientific">Pseudomonas aeruginosa (strain LESB58)</name>
    <dbReference type="NCBI Taxonomy" id="557722"/>
    <lineage>
        <taxon>Bacteria</taxon>
        <taxon>Pseudomonadati</taxon>
        <taxon>Pseudomonadota</taxon>
        <taxon>Gammaproteobacteria</taxon>
        <taxon>Pseudomonadales</taxon>
        <taxon>Pseudomonadaceae</taxon>
        <taxon>Pseudomonas</taxon>
    </lineage>
</organism>
<sequence length="556" mass="62957">MSKPETTAAPNFLRQIVQADLDAGKHAKIVTRFPPEPNGYLHIGHAKSICLNFGLAQEFAGDCHLRFDDTNPAKEDQEYIDAIEADIKWLGFQWSGEVCYASNYFDQLHAWAIELIKAGKAFVCDLGPEEMREYRGTLTEPGRNSPYRDRSVEENLDLFARMKAGEFPDGARSLRAKIDMGSPNMNLRDPILYRIRHAHHHQTGDKWCIYPSYDFTHGQSDAIEGITHSICTLEFEDHRPLYEWFLANLPVPAQPRQYEFSRLNLNYTVTSKRKLKQLVDEGHVSGWDDPRMSTLSGYRRRGYTPESIRNFCEMIGVNRASGVVDIGMLEFSIRDHLDATAPRAMCVLKPLKVVITNYPEGQVENLELPRHPKEDMGVRVLPFGRELFIDAGDFEEVPPAGYKRLIPGGEVRLRGSYVIRADEAIKDADGNIVELRCSYDPDTLGKNPEGRKVKGVIHWVPAEGSVECEVRLYDRLFRSANPEKAEEGGSFLDNINADSLQVLTGCRAEPSLGQANPEDRFQFEREGYFVADLKDSRPGKPVFNRTVTLRDSWGQG</sequence>
<reference key="1">
    <citation type="journal article" date="2009" name="Genome Res.">
        <title>Newly introduced genomic prophage islands are critical determinants of in vivo competitiveness in the Liverpool epidemic strain of Pseudomonas aeruginosa.</title>
        <authorList>
            <person name="Winstanley C."/>
            <person name="Langille M.G.I."/>
            <person name="Fothergill J.L."/>
            <person name="Kukavica-Ibrulj I."/>
            <person name="Paradis-Bleau C."/>
            <person name="Sanschagrin F."/>
            <person name="Thomson N.R."/>
            <person name="Winsor G.L."/>
            <person name="Quail M.A."/>
            <person name="Lennard N."/>
            <person name="Bignell A."/>
            <person name="Clarke L."/>
            <person name="Seeger K."/>
            <person name="Saunders D."/>
            <person name="Harris D."/>
            <person name="Parkhill J."/>
            <person name="Hancock R.E.W."/>
            <person name="Brinkman F.S.L."/>
            <person name="Levesque R.C."/>
        </authorList>
    </citation>
    <scope>NUCLEOTIDE SEQUENCE [LARGE SCALE GENOMIC DNA]</scope>
    <source>
        <strain>LESB58</strain>
    </source>
</reference>
<keyword id="KW-0030">Aminoacyl-tRNA synthetase</keyword>
<keyword id="KW-0067">ATP-binding</keyword>
<keyword id="KW-0963">Cytoplasm</keyword>
<keyword id="KW-0436">Ligase</keyword>
<keyword id="KW-0547">Nucleotide-binding</keyword>
<keyword id="KW-0648">Protein biosynthesis</keyword>
<proteinExistence type="inferred from homology"/>
<feature type="chain" id="PRO_1000199102" description="Glutamine--tRNA ligase">
    <location>
        <begin position="1"/>
        <end position="556"/>
    </location>
</feature>
<feature type="short sequence motif" description="'HIGH' region" evidence="1">
    <location>
        <begin position="35"/>
        <end position="45"/>
    </location>
</feature>
<feature type="short sequence motif" description="'KMSKS' region" evidence="1">
    <location>
        <begin position="269"/>
        <end position="273"/>
    </location>
</feature>
<feature type="binding site" evidence="1">
    <location>
        <begin position="36"/>
        <end position="38"/>
    </location>
    <ligand>
        <name>ATP</name>
        <dbReference type="ChEBI" id="CHEBI:30616"/>
    </ligand>
</feature>
<feature type="binding site" evidence="1">
    <location>
        <begin position="42"/>
        <end position="48"/>
    </location>
    <ligand>
        <name>ATP</name>
        <dbReference type="ChEBI" id="CHEBI:30616"/>
    </ligand>
</feature>
<feature type="binding site" evidence="1">
    <location>
        <position position="68"/>
    </location>
    <ligand>
        <name>L-glutamine</name>
        <dbReference type="ChEBI" id="CHEBI:58359"/>
    </ligand>
</feature>
<feature type="binding site" evidence="1">
    <location>
        <position position="213"/>
    </location>
    <ligand>
        <name>L-glutamine</name>
        <dbReference type="ChEBI" id="CHEBI:58359"/>
    </ligand>
</feature>
<feature type="binding site" evidence="1">
    <location>
        <position position="232"/>
    </location>
    <ligand>
        <name>ATP</name>
        <dbReference type="ChEBI" id="CHEBI:30616"/>
    </ligand>
</feature>
<feature type="binding site" evidence="1">
    <location>
        <begin position="262"/>
        <end position="263"/>
    </location>
    <ligand>
        <name>ATP</name>
        <dbReference type="ChEBI" id="CHEBI:30616"/>
    </ligand>
</feature>